<organism>
    <name type="scientific">Streptococcus uberis (strain ATCC BAA-854 / 0140J)</name>
    <dbReference type="NCBI Taxonomy" id="218495"/>
    <lineage>
        <taxon>Bacteria</taxon>
        <taxon>Bacillati</taxon>
        <taxon>Bacillota</taxon>
        <taxon>Bacilli</taxon>
        <taxon>Lactobacillales</taxon>
        <taxon>Streptococcaceae</taxon>
        <taxon>Streptococcus</taxon>
    </lineage>
</organism>
<name>RIMP_STRU0</name>
<proteinExistence type="inferred from homology"/>
<evidence type="ECO:0000255" key="1">
    <source>
        <dbReference type="HAMAP-Rule" id="MF_01077"/>
    </source>
</evidence>
<dbReference type="EMBL" id="AM946015">
    <property type="protein sequence ID" value="CAR43160.1"/>
    <property type="molecule type" value="Genomic_DNA"/>
</dbReference>
<dbReference type="SMR" id="B9DVC1"/>
<dbReference type="STRING" id="218495.SUB1470"/>
<dbReference type="KEGG" id="sub:SUB1470"/>
<dbReference type="eggNOG" id="COG0779">
    <property type="taxonomic scope" value="Bacteria"/>
</dbReference>
<dbReference type="HOGENOM" id="CLU_070525_2_0_9"/>
<dbReference type="Proteomes" id="UP000000449">
    <property type="component" value="Chromosome"/>
</dbReference>
<dbReference type="GO" id="GO:0005829">
    <property type="term" value="C:cytosol"/>
    <property type="evidence" value="ECO:0007669"/>
    <property type="project" value="TreeGrafter"/>
</dbReference>
<dbReference type="GO" id="GO:0000028">
    <property type="term" value="P:ribosomal small subunit assembly"/>
    <property type="evidence" value="ECO:0007669"/>
    <property type="project" value="TreeGrafter"/>
</dbReference>
<dbReference type="GO" id="GO:0006412">
    <property type="term" value="P:translation"/>
    <property type="evidence" value="ECO:0007669"/>
    <property type="project" value="TreeGrafter"/>
</dbReference>
<dbReference type="CDD" id="cd01734">
    <property type="entry name" value="YlxS_C"/>
    <property type="match status" value="1"/>
</dbReference>
<dbReference type="Gene3D" id="2.30.30.180">
    <property type="entry name" value="Ribosome maturation factor RimP, C-terminal domain"/>
    <property type="match status" value="1"/>
</dbReference>
<dbReference type="Gene3D" id="3.30.300.70">
    <property type="entry name" value="RimP-like superfamily, N-terminal"/>
    <property type="match status" value="1"/>
</dbReference>
<dbReference type="HAMAP" id="MF_01077">
    <property type="entry name" value="RimP"/>
    <property type="match status" value="1"/>
</dbReference>
<dbReference type="InterPro" id="IPR003728">
    <property type="entry name" value="Ribosome_maturation_RimP"/>
</dbReference>
<dbReference type="InterPro" id="IPR028998">
    <property type="entry name" value="RimP_C"/>
</dbReference>
<dbReference type="InterPro" id="IPR036847">
    <property type="entry name" value="RimP_C_sf"/>
</dbReference>
<dbReference type="InterPro" id="IPR028989">
    <property type="entry name" value="RimP_N"/>
</dbReference>
<dbReference type="InterPro" id="IPR035956">
    <property type="entry name" value="RimP_N_sf"/>
</dbReference>
<dbReference type="NCBIfam" id="NF000928">
    <property type="entry name" value="PRK00092.1-2"/>
    <property type="match status" value="1"/>
</dbReference>
<dbReference type="PANTHER" id="PTHR33867">
    <property type="entry name" value="RIBOSOME MATURATION FACTOR RIMP"/>
    <property type="match status" value="1"/>
</dbReference>
<dbReference type="PANTHER" id="PTHR33867:SF1">
    <property type="entry name" value="RIBOSOME MATURATION FACTOR RIMP"/>
    <property type="match status" value="1"/>
</dbReference>
<dbReference type="Pfam" id="PF17384">
    <property type="entry name" value="DUF150_C"/>
    <property type="match status" value="1"/>
</dbReference>
<dbReference type="Pfam" id="PF02576">
    <property type="entry name" value="RimP_N"/>
    <property type="match status" value="1"/>
</dbReference>
<dbReference type="SUPFAM" id="SSF74942">
    <property type="entry name" value="YhbC-like, C-terminal domain"/>
    <property type="match status" value="1"/>
</dbReference>
<dbReference type="SUPFAM" id="SSF75420">
    <property type="entry name" value="YhbC-like, N-terminal domain"/>
    <property type="match status" value="1"/>
</dbReference>
<feature type="chain" id="PRO_0000384788" description="Ribosome maturation factor RimP">
    <location>
        <begin position="1"/>
        <end position="158"/>
    </location>
</feature>
<keyword id="KW-0963">Cytoplasm</keyword>
<keyword id="KW-1185">Reference proteome</keyword>
<keyword id="KW-0690">Ribosome biogenesis</keyword>
<gene>
    <name evidence="1" type="primary">rimP</name>
    <name type="ordered locus">SUB1470</name>
</gene>
<sequence>MANQTIIDTVMKTVSPVIEPPYELVDVEYEKMGSDYILSVFVDKEGGISVEDTVTLTELISPLLDAIHPDPFPEQYMLEVSSPGLERPLKTPEALTKAIGSYVNVSLYKAIDKVKVFQGDLVAFDGDTLTIHYLDKTRQKTVEIPYQTVAKARLAVKL</sequence>
<reference key="1">
    <citation type="journal article" date="2009" name="BMC Genomics">
        <title>Evidence for niche adaptation in the genome of the bovine pathogen Streptococcus uberis.</title>
        <authorList>
            <person name="Ward P.N."/>
            <person name="Holden M.T.G."/>
            <person name="Leigh J.A."/>
            <person name="Lennard N."/>
            <person name="Bignell A."/>
            <person name="Barron A."/>
            <person name="Clark L."/>
            <person name="Quail M.A."/>
            <person name="Woodward J."/>
            <person name="Barrell B.G."/>
            <person name="Egan S.A."/>
            <person name="Field T.R."/>
            <person name="Maskell D."/>
            <person name="Kehoe M."/>
            <person name="Dowson C.G."/>
            <person name="Chanter N."/>
            <person name="Whatmore A.M."/>
            <person name="Bentley S.D."/>
            <person name="Parkhill J."/>
        </authorList>
    </citation>
    <scope>NUCLEOTIDE SEQUENCE [LARGE SCALE GENOMIC DNA]</scope>
    <source>
        <strain>ATCC BAA-854 / 0140J</strain>
    </source>
</reference>
<accession>B9DVC1</accession>
<protein>
    <recommendedName>
        <fullName evidence="1">Ribosome maturation factor RimP</fullName>
    </recommendedName>
</protein>
<comment type="function">
    <text evidence="1">Required for maturation of 30S ribosomal subunits.</text>
</comment>
<comment type="subcellular location">
    <subcellularLocation>
        <location evidence="1">Cytoplasm</location>
    </subcellularLocation>
</comment>
<comment type="similarity">
    <text evidence="1">Belongs to the RimP family.</text>
</comment>